<comment type="function">
    <text evidence="1">Catalyzes a salvage reaction resulting in the formation of AMP, that is energically less costly than de novo synthesis.</text>
</comment>
<comment type="catalytic activity">
    <reaction evidence="1">
        <text>AMP + diphosphate = 5-phospho-alpha-D-ribose 1-diphosphate + adenine</text>
        <dbReference type="Rhea" id="RHEA:16609"/>
        <dbReference type="ChEBI" id="CHEBI:16708"/>
        <dbReference type="ChEBI" id="CHEBI:33019"/>
        <dbReference type="ChEBI" id="CHEBI:58017"/>
        <dbReference type="ChEBI" id="CHEBI:456215"/>
        <dbReference type="EC" id="2.4.2.7"/>
    </reaction>
</comment>
<comment type="pathway">
    <text evidence="1">Purine metabolism; AMP biosynthesis via salvage pathway; AMP from adenine: step 1/1.</text>
</comment>
<comment type="subunit">
    <text evidence="1">Homodimer.</text>
</comment>
<comment type="subcellular location">
    <subcellularLocation>
        <location evidence="1">Cytoplasm</location>
    </subcellularLocation>
</comment>
<comment type="similarity">
    <text evidence="1">Belongs to the purine/pyrimidine phosphoribosyltransferase family.</text>
</comment>
<name>APT_ECO27</name>
<feature type="chain" id="PRO_1000116241" description="Adenine phosphoribosyltransferase">
    <location>
        <begin position="1"/>
        <end position="183"/>
    </location>
</feature>
<keyword id="KW-0963">Cytoplasm</keyword>
<keyword id="KW-0328">Glycosyltransferase</keyword>
<keyword id="KW-0660">Purine salvage</keyword>
<keyword id="KW-1185">Reference proteome</keyword>
<keyword id="KW-0808">Transferase</keyword>
<evidence type="ECO:0000255" key="1">
    <source>
        <dbReference type="HAMAP-Rule" id="MF_00004"/>
    </source>
</evidence>
<accession>B7UKE9</accession>
<dbReference type="EC" id="2.4.2.7" evidence="1"/>
<dbReference type="EMBL" id="FM180568">
    <property type="protein sequence ID" value="CAS07952.1"/>
    <property type="molecule type" value="Genomic_DNA"/>
</dbReference>
<dbReference type="RefSeq" id="WP_000127356.1">
    <property type="nucleotide sequence ID" value="NC_011601.1"/>
</dbReference>
<dbReference type="SMR" id="B7UKE9"/>
<dbReference type="GeneID" id="93776981"/>
<dbReference type="KEGG" id="ecg:E2348C_0404"/>
<dbReference type="HOGENOM" id="CLU_063339_3_0_6"/>
<dbReference type="UniPathway" id="UPA00588">
    <property type="reaction ID" value="UER00646"/>
</dbReference>
<dbReference type="Proteomes" id="UP000008205">
    <property type="component" value="Chromosome"/>
</dbReference>
<dbReference type="GO" id="GO:0005737">
    <property type="term" value="C:cytoplasm"/>
    <property type="evidence" value="ECO:0007669"/>
    <property type="project" value="UniProtKB-SubCell"/>
</dbReference>
<dbReference type="GO" id="GO:0002055">
    <property type="term" value="F:adenine binding"/>
    <property type="evidence" value="ECO:0007669"/>
    <property type="project" value="TreeGrafter"/>
</dbReference>
<dbReference type="GO" id="GO:0003999">
    <property type="term" value="F:adenine phosphoribosyltransferase activity"/>
    <property type="evidence" value="ECO:0007669"/>
    <property type="project" value="UniProtKB-UniRule"/>
</dbReference>
<dbReference type="GO" id="GO:0016208">
    <property type="term" value="F:AMP binding"/>
    <property type="evidence" value="ECO:0007669"/>
    <property type="project" value="TreeGrafter"/>
</dbReference>
<dbReference type="GO" id="GO:0006168">
    <property type="term" value="P:adenine salvage"/>
    <property type="evidence" value="ECO:0007669"/>
    <property type="project" value="InterPro"/>
</dbReference>
<dbReference type="GO" id="GO:0044209">
    <property type="term" value="P:AMP salvage"/>
    <property type="evidence" value="ECO:0007669"/>
    <property type="project" value="UniProtKB-UniRule"/>
</dbReference>
<dbReference type="GO" id="GO:0006166">
    <property type="term" value="P:purine ribonucleoside salvage"/>
    <property type="evidence" value="ECO:0007669"/>
    <property type="project" value="UniProtKB-KW"/>
</dbReference>
<dbReference type="CDD" id="cd06223">
    <property type="entry name" value="PRTases_typeI"/>
    <property type="match status" value="1"/>
</dbReference>
<dbReference type="FunFam" id="3.40.50.2020:FF:000004">
    <property type="entry name" value="Adenine phosphoribosyltransferase"/>
    <property type="match status" value="1"/>
</dbReference>
<dbReference type="Gene3D" id="3.40.50.2020">
    <property type="match status" value="1"/>
</dbReference>
<dbReference type="HAMAP" id="MF_00004">
    <property type="entry name" value="Aden_phosphoribosyltr"/>
    <property type="match status" value="1"/>
</dbReference>
<dbReference type="InterPro" id="IPR005764">
    <property type="entry name" value="Ade_phspho_trans"/>
</dbReference>
<dbReference type="InterPro" id="IPR000836">
    <property type="entry name" value="PRibTrfase_dom"/>
</dbReference>
<dbReference type="InterPro" id="IPR029057">
    <property type="entry name" value="PRTase-like"/>
</dbReference>
<dbReference type="InterPro" id="IPR050054">
    <property type="entry name" value="UPRTase/APRTase"/>
</dbReference>
<dbReference type="NCBIfam" id="TIGR01090">
    <property type="entry name" value="apt"/>
    <property type="match status" value="1"/>
</dbReference>
<dbReference type="NCBIfam" id="NF002632">
    <property type="entry name" value="PRK02304.1-1"/>
    <property type="match status" value="1"/>
</dbReference>
<dbReference type="NCBIfam" id="NF002633">
    <property type="entry name" value="PRK02304.1-2"/>
    <property type="match status" value="1"/>
</dbReference>
<dbReference type="NCBIfam" id="NF002634">
    <property type="entry name" value="PRK02304.1-3"/>
    <property type="match status" value="1"/>
</dbReference>
<dbReference type="NCBIfam" id="NF002636">
    <property type="entry name" value="PRK02304.1-5"/>
    <property type="match status" value="1"/>
</dbReference>
<dbReference type="PANTHER" id="PTHR32315">
    <property type="entry name" value="ADENINE PHOSPHORIBOSYLTRANSFERASE"/>
    <property type="match status" value="1"/>
</dbReference>
<dbReference type="PANTHER" id="PTHR32315:SF3">
    <property type="entry name" value="ADENINE PHOSPHORIBOSYLTRANSFERASE"/>
    <property type="match status" value="1"/>
</dbReference>
<dbReference type="Pfam" id="PF00156">
    <property type="entry name" value="Pribosyltran"/>
    <property type="match status" value="1"/>
</dbReference>
<dbReference type="SUPFAM" id="SSF53271">
    <property type="entry name" value="PRTase-like"/>
    <property type="match status" value="1"/>
</dbReference>
<dbReference type="PROSITE" id="PS00103">
    <property type="entry name" value="PUR_PYR_PR_TRANSFER"/>
    <property type="match status" value="1"/>
</dbReference>
<proteinExistence type="inferred from homology"/>
<reference key="1">
    <citation type="journal article" date="2009" name="J. Bacteriol.">
        <title>Complete genome sequence and comparative genome analysis of enteropathogenic Escherichia coli O127:H6 strain E2348/69.</title>
        <authorList>
            <person name="Iguchi A."/>
            <person name="Thomson N.R."/>
            <person name="Ogura Y."/>
            <person name="Saunders D."/>
            <person name="Ooka T."/>
            <person name="Henderson I.R."/>
            <person name="Harris D."/>
            <person name="Asadulghani M."/>
            <person name="Kurokawa K."/>
            <person name="Dean P."/>
            <person name="Kenny B."/>
            <person name="Quail M.A."/>
            <person name="Thurston S."/>
            <person name="Dougan G."/>
            <person name="Hayashi T."/>
            <person name="Parkhill J."/>
            <person name="Frankel G."/>
        </authorList>
    </citation>
    <scope>NUCLEOTIDE SEQUENCE [LARGE SCALE GENOMIC DNA]</scope>
    <source>
        <strain>E2348/69 / EPEC</strain>
    </source>
</reference>
<organism>
    <name type="scientific">Escherichia coli O127:H6 (strain E2348/69 / EPEC)</name>
    <dbReference type="NCBI Taxonomy" id="574521"/>
    <lineage>
        <taxon>Bacteria</taxon>
        <taxon>Pseudomonadati</taxon>
        <taxon>Pseudomonadota</taxon>
        <taxon>Gammaproteobacteria</taxon>
        <taxon>Enterobacterales</taxon>
        <taxon>Enterobacteriaceae</taxon>
        <taxon>Escherichia</taxon>
    </lineage>
</organism>
<gene>
    <name evidence="1" type="primary">apt</name>
    <name type="ordered locus">E2348C_0404</name>
</gene>
<protein>
    <recommendedName>
        <fullName evidence="1">Adenine phosphoribosyltransferase</fullName>
        <shortName evidence="1">APRT</shortName>
        <ecNumber evidence="1">2.4.2.7</ecNumber>
    </recommendedName>
</protein>
<sequence length="183" mass="19859">MTATAQQLEYLKNSIKSIQDYPKPGILFRDVTSLLEDPKAYALSIDLLVERYKNAGITKVVGTEARGFLFGAPVALGLGVGFVPVRKPGKLPRETISETYDLEYGTDQLEIHVDAIKPGDKVLVVDDLLATGGTIEATVKLIRRLGGEVADAAFIINLFDLGGEQRLEKQGITSYSLVPFPGH</sequence>